<accession>B1XTK9</accession>
<evidence type="ECO:0000255" key="1">
    <source>
        <dbReference type="HAMAP-Rule" id="MF_01217"/>
    </source>
</evidence>
<evidence type="ECO:0000255" key="2">
    <source>
        <dbReference type="PROSITE-ProRule" id="PRU00258"/>
    </source>
</evidence>
<comment type="function">
    <text evidence="1">Carrier of the growing fatty acid chain in fatty acid biosynthesis.</text>
</comment>
<comment type="pathway">
    <text evidence="1">Lipid metabolism; fatty acid biosynthesis.</text>
</comment>
<comment type="subcellular location">
    <subcellularLocation>
        <location evidence="1">Cytoplasm</location>
    </subcellularLocation>
</comment>
<comment type="PTM">
    <text evidence="1">4'-phosphopantetheine is transferred from CoA to a specific serine of apo-ACP by AcpS. This modification is essential for activity because fatty acids are bound in thioester linkage to the sulfhydryl of the prosthetic group.</text>
</comment>
<comment type="similarity">
    <text evidence="1">Belongs to the acyl carrier protein (ACP) family.</text>
</comment>
<protein>
    <recommendedName>
        <fullName evidence="1">Acyl carrier protein</fullName>
        <shortName evidence="1">ACP</shortName>
    </recommendedName>
</protein>
<keyword id="KW-0963">Cytoplasm</keyword>
<keyword id="KW-0275">Fatty acid biosynthesis</keyword>
<keyword id="KW-0276">Fatty acid metabolism</keyword>
<keyword id="KW-0444">Lipid biosynthesis</keyword>
<keyword id="KW-0443">Lipid metabolism</keyword>
<keyword id="KW-0596">Phosphopantetheine</keyword>
<keyword id="KW-0597">Phosphoprotein</keyword>
<name>ACP_POLNS</name>
<feature type="chain" id="PRO_1000139050" description="Acyl carrier protein">
    <location>
        <begin position="1"/>
        <end position="79"/>
    </location>
</feature>
<feature type="domain" description="Carrier" evidence="2">
    <location>
        <begin position="2"/>
        <end position="77"/>
    </location>
</feature>
<feature type="modified residue" description="O-(pantetheine 4'-phosphoryl)serine" evidence="2">
    <location>
        <position position="37"/>
    </location>
</feature>
<organism>
    <name type="scientific">Polynucleobacter necessarius subsp. necessarius (strain STIR1)</name>
    <dbReference type="NCBI Taxonomy" id="452638"/>
    <lineage>
        <taxon>Bacteria</taxon>
        <taxon>Pseudomonadati</taxon>
        <taxon>Pseudomonadota</taxon>
        <taxon>Betaproteobacteria</taxon>
        <taxon>Burkholderiales</taxon>
        <taxon>Burkholderiaceae</taxon>
        <taxon>Polynucleobacter</taxon>
    </lineage>
</organism>
<sequence length="79" mass="8625">MDNIEQRVKKIVAEQLGVAEGDIKNESSFVNDLGADSLDTIELVMALEDEFGIEIPDEEAEKITTVQLAIDFAKSKAQG</sequence>
<reference key="1">
    <citation type="journal article" date="2013" name="Proc. Natl. Acad. Sci. U.S.A.">
        <title>Polynucleobacter necessarius, a model for genome reduction in both free-living and symbiotic bacteria.</title>
        <authorList>
            <person name="Boscaro V."/>
            <person name="Felletti M."/>
            <person name="Vannini C."/>
            <person name="Ackerman M.S."/>
            <person name="Chain P.S."/>
            <person name="Malfatti S."/>
            <person name="Vergez L.M."/>
            <person name="Shin M."/>
            <person name="Doak T.G."/>
            <person name="Lynch M."/>
            <person name="Petroni G."/>
        </authorList>
    </citation>
    <scope>NUCLEOTIDE SEQUENCE [LARGE SCALE GENOMIC DNA]</scope>
    <source>
        <strain>STIR1</strain>
    </source>
</reference>
<gene>
    <name evidence="1" type="primary">acpP</name>
    <name type="ordered locus">Pnec_0408</name>
</gene>
<proteinExistence type="inferred from homology"/>
<dbReference type="EMBL" id="CP001010">
    <property type="protein sequence ID" value="ACB43686.1"/>
    <property type="molecule type" value="Genomic_DNA"/>
</dbReference>
<dbReference type="SMR" id="B1XTK9"/>
<dbReference type="STRING" id="452638.Pnec_0408"/>
<dbReference type="KEGG" id="pne:Pnec_0408"/>
<dbReference type="eggNOG" id="COG0236">
    <property type="taxonomic scope" value="Bacteria"/>
</dbReference>
<dbReference type="HOGENOM" id="CLU_108696_5_1_4"/>
<dbReference type="OrthoDB" id="9804551at2"/>
<dbReference type="UniPathway" id="UPA00094"/>
<dbReference type="GO" id="GO:0005829">
    <property type="term" value="C:cytosol"/>
    <property type="evidence" value="ECO:0007669"/>
    <property type="project" value="TreeGrafter"/>
</dbReference>
<dbReference type="GO" id="GO:0016020">
    <property type="term" value="C:membrane"/>
    <property type="evidence" value="ECO:0007669"/>
    <property type="project" value="GOC"/>
</dbReference>
<dbReference type="GO" id="GO:0000035">
    <property type="term" value="F:acyl binding"/>
    <property type="evidence" value="ECO:0007669"/>
    <property type="project" value="TreeGrafter"/>
</dbReference>
<dbReference type="GO" id="GO:0000036">
    <property type="term" value="F:acyl carrier activity"/>
    <property type="evidence" value="ECO:0007669"/>
    <property type="project" value="UniProtKB-UniRule"/>
</dbReference>
<dbReference type="GO" id="GO:0031177">
    <property type="term" value="F:phosphopantetheine binding"/>
    <property type="evidence" value="ECO:0007669"/>
    <property type="project" value="InterPro"/>
</dbReference>
<dbReference type="GO" id="GO:0009245">
    <property type="term" value="P:lipid A biosynthetic process"/>
    <property type="evidence" value="ECO:0007669"/>
    <property type="project" value="TreeGrafter"/>
</dbReference>
<dbReference type="FunFam" id="1.10.1200.10:FF:000001">
    <property type="entry name" value="Acyl carrier protein"/>
    <property type="match status" value="1"/>
</dbReference>
<dbReference type="Gene3D" id="1.10.1200.10">
    <property type="entry name" value="ACP-like"/>
    <property type="match status" value="1"/>
</dbReference>
<dbReference type="HAMAP" id="MF_01217">
    <property type="entry name" value="Acyl_carrier"/>
    <property type="match status" value="1"/>
</dbReference>
<dbReference type="InterPro" id="IPR003231">
    <property type="entry name" value="ACP"/>
</dbReference>
<dbReference type="InterPro" id="IPR036736">
    <property type="entry name" value="ACP-like_sf"/>
</dbReference>
<dbReference type="InterPro" id="IPR020806">
    <property type="entry name" value="PKS_PP-bd"/>
</dbReference>
<dbReference type="InterPro" id="IPR009081">
    <property type="entry name" value="PP-bd_ACP"/>
</dbReference>
<dbReference type="InterPro" id="IPR006162">
    <property type="entry name" value="Ppantetheine_attach_site"/>
</dbReference>
<dbReference type="NCBIfam" id="TIGR00517">
    <property type="entry name" value="acyl_carrier"/>
    <property type="match status" value="1"/>
</dbReference>
<dbReference type="NCBIfam" id="NF002148">
    <property type="entry name" value="PRK00982.1-2"/>
    <property type="match status" value="1"/>
</dbReference>
<dbReference type="NCBIfam" id="NF002149">
    <property type="entry name" value="PRK00982.1-3"/>
    <property type="match status" value="1"/>
</dbReference>
<dbReference type="NCBIfam" id="NF002150">
    <property type="entry name" value="PRK00982.1-4"/>
    <property type="match status" value="1"/>
</dbReference>
<dbReference type="NCBIfam" id="NF002151">
    <property type="entry name" value="PRK00982.1-5"/>
    <property type="match status" value="1"/>
</dbReference>
<dbReference type="PANTHER" id="PTHR20863">
    <property type="entry name" value="ACYL CARRIER PROTEIN"/>
    <property type="match status" value="1"/>
</dbReference>
<dbReference type="PANTHER" id="PTHR20863:SF76">
    <property type="entry name" value="CARRIER DOMAIN-CONTAINING PROTEIN"/>
    <property type="match status" value="1"/>
</dbReference>
<dbReference type="Pfam" id="PF00550">
    <property type="entry name" value="PP-binding"/>
    <property type="match status" value="1"/>
</dbReference>
<dbReference type="SMART" id="SM00823">
    <property type="entry name" value="PKS_PP"/>
    <property type="match status" value="1"/>
</dbReference>
<dbReference type="SUPFAM" id="SSF47336">
    <property type="entry name" value="ACP-like"/>
    <property type="match status" value="1"/>
</dbReference>
<dbReference type="PROSITE" id="PS50075">
    <property type="entry name" value="CARRIER"/>
    <property type="match status" value="1"/>
</dbReference>
<dbReference type="PROSITE" id="PS00012">
    <property type="entry name" value="PHOSPHOPANTETHEINE"/>
    <property type="match status" value="1"/>
</dbReference>